<feature type="chain" id="PRO_1000043021" description="Anthranilate phosphoribosyltransferase">
    <location>
        <begin position="1"/>
        <end position="344"/>
    </location>
</feature>
<feature type="binding site" evidence="1">
    <location>
        <position position="80"/>
    </location>
    <ligand>
        <name>5-phospho-alpha-D-ribose 1-diphosphate</name>
        <dbReference type="ChEBI" id="CHEBI:58017"/>
    </ligand>
</feature>
<feature type="binding site" evidence="1">
    <location>
        <position position="80"/>
    </location>
    <ligand>
        <name>anthranilate</name>
        <dbReference type="ChEBI" id="CHEBI:16567"/>
        <label>1</label>
    </ligand>
</feature>
<feature type="binding site" evidence="1">
    <location>
        <begin position="83"/>
        <end position="84"/>
    </location>
    <ligand>
        <name>5-phospho-alpha-D-ribose 1-diphosphate</name>
        <dbReference type="ChEBI" id="CHEBI:58017"/>
    </ligand>
</feature>
<feature type="binding site" evidence="1">
    <location>
        <position position="88"/>
    </location>
    <ligand>
        <name>5-phospho-alpha-D-ribose 1-diphosphate</name>
        <dbReference type="ChEBI" id="CHEBI:58017"/>
    </ligand>
</feature>
<feature type="binding site" evidence="1">
    <location>
        <begin position="90"/>
        <end position="93"/>
    </location>
    <ligand>
        <name>5-phospho-alpha-D-ribose 1-diphosphate</name>
        <dbReference type="ChEBI" id="CHEBI:58017"/>
    </ligand>
</feature>
<feature type="binding site" evidence="1">
    <location>
        <position position="92"/>
    </location>
    <ligand>
        <name>Mg(2+)</name>
        <dbReference type="ChEBI" id="CHEBI:18420"/>
        <label>1</label>
    </ligand>
</feature>
<feature type="binding site" evidence="1">
    <location>
        <begin position="108"/>
        <end position="116"/>
    </location>
    <ligand>
        <name>5-phospho-alpha-D-ribose 1-diphosphate</name>
        <dbReference type="ChEBI" id="CHEBI:58017"/>
    </ligand>
</feature>
<feature type="binding site" evidence="1">
    <location>
        <position position="111"/>
    </location>
    <ligand>
        <name>anthranilate</name>
        <dbReference type="ChEBI" id="CHEBI:16567"/>
        <label>1</label>
    </ligand>
</feature>
<feature type="binding site" evidence="1">
    <location>
        <position position="120"/>
    </location>
    <ligand>
        <name>5-phospho-alpha-D-ribose 1-diphosphate</name>
        <dbReference type="ChEBI" id="CHEBI:58017"/>
    </ligand>
</feature>
<feature type="binding site" evidence="1">
    <location>
        <position position="166"/>
    </location>
    <ligand>
        <name>anthranilate</name>
        <dbReference type="ChEBI" id="CHEBI:16567"/>
        <label>2</label>
    </ligand>
</feature>
<feature type="binding site" evidence="1">
    <location>
        <position position="225"/>
    </location>
    <ligand>
        <name>Mg(2+)</name>
        <dbReference type="ChEBI" id="CHEBI:18420"/>
        <label>2</label>
    </ligand>
</feature>
<feature type="binding site" evidence="1">
    <location>
        <position position="226"/>
    </location>
    <ligand>
        <name>Mg(2+)</name>
        <dbReference type="ChEBI" id="CHEBI:18420"/>
        <label>1</label>
    </ligand>
</feature>
<feature type="binding site" evidence="1">
    <location>
        <position position="226"/>
    </location>
    <ligand>
        <name>Mg(2+)</name>
        <dbReference type="ChEBI" id="CHEBI:18420"/>
        <label>2</label>
    </ligand>
</feature>
<dbReference type="EC" id="2.4.2.18" evidence="1"/>
<dbReference type="EMBL" id="CP000675">
    <property type="protein sequence ID" value="ABQ56381.1"/>
    <property type="molecule type" value="Genomic_DNA"/>
</dbReference>
<dbReference type="RefSeq" id="WP_011945951.1">
    <property type="nucleotide sequence ID" value="NC_009494.2"/>
</dbReference>
<dbReference type="SMR" id="A5IG81"/>
<dbReference type="KEGG" id="lpc:LPC_2461"/>
<dbReference type="HOGENOM" id="CLU_034315_2_1_6"/>
<dbReference type="UniPathway" id="UPA00035">
    <property type="reaction ID" value="UER00041"/>
</dbReference>
<dbReference type="GO" id="GO:0005829">
    <property type="term" value="C:cytosol"/>
    <property type="evidence" value="ECO:0007669"/>
    <property type="project" value="TreeGrafter"/>
</dbReference>
<dbReference type="GO" id="GO:0004048">
    <property type="term" value="F:anthranilate phosphoribosyltransferase activity"/>
    <property type="evidence" value="ECO:0007669"/>
    <property type="project" value="UniProtKB-UniRule"/>
</dbReference>
<dbReference type="GO" id="GO:0000287">
    <property type="term" value="F:magnesium ion binding"/>
    <property type="evidence" value="ECO:0007669"/>
    <property type="project" value="UniProtKB-UniRule"/>
</dbReference>
<dbReference type="GO" id="GO:0000162">
    <property type="term" value="P:L-tryptophan biosynthetic process"/>
    <property type="evidence" value="ECO:0007669"/>
    <property type="project" value="UniProtKB-UniRule"/>
</dbReference>
<dbReference type="FunFam" id="3.40.1030.10:FF:000002">
    <property type="entry name" value="Anthranilate phosphoribosyltransferase"/>
    <property type="match status" value="1"/>
</dbReference>
<dbReference type="Gene3D" id="3.40.1030.10">
    <property type="entry name" value="Nucleoside phosphorylase/phosphoribosyltransferase catalytic domain"/>
    <property type="match status" value="1"/>
</dbReference>
<dbReference type="Gene3D" id="1.20.970.10">
    <property type="entry name" value="Transferase, Pyrimidine Nucleoside Phosphorylase, Chain C"/>
    <property type="match status" value="1"/>
</dbReference>
<dbReference type="HAMAP" id="MF_00211">
    <property type="entry name" value="TrpD"/>
    <property type="match status" value="1"/>
</dbReference>
<dbReference type="InterPro" id="IPR005940">
    <property type="entry name" value="Anthranilate_Pribosyl_Tfrase"/>
</dbReference>
<dbReference type="InterPro" id="IPR000312">
    <property type="entry name" value="Glycosyl_Trfase_fam3"/>
</dbReference>
<dbReference type="InterPro" id="IPR017459">
    <property type="entry name" value="Glycosyl_Trfase_fam3_N_dom"/>
</dbReference>
<dbReference type="InterPro" id="IPR036320">
    <property type="entry name" value="Glycosyl_Trfase_fam3_N_dom_sf"/>
</dbReference>
<dbReference type="InterPro" id="IPR035902">
    <property type="entry name" value="Nuc_phospho_transferase"/>
</dbReference>
<dbReference type="NCBIfam" id="TIGR01245">
    <property type="entry name" value="trpD"/>
    <property type="match status" value="1"/>
</dbReference>
<dbReference type="PANTHER" id="PTHR43285">
    <property type="entry name" value="ANTHRANILATE PHOSPHORIBOSYLTRANSFERASE"/>
    <property type="match status" value="1"/>
</dbReference>
<dbReference type="PANTHER" id="PTHR43285:SF2">
    <property type="entry name" value="ANTHRANILATE PHOSPHORIBOSYLTRANSFERASE"/>
    <property type="match status" value="1"/>
</dbReference>
<dbReference type="Pfam" id="PF02885">
    <property type="entry name" value="Glycos_trans_3N"/>
    <property type="match status" value="1"/>
</dbReference>
<dbReference type="Pfam" id="PF00591">
    <property type="entry name" value="Glycos_transf_3"/>
    <property type="match status" value="1"/>
</dbReference>
<dbReference type="SUPFAM" id="SSF52418">
    <property type="entry name" value="Nucleoside phosphorylase/phosphoribosyltransferase catalytic domain"/>
    <property type="match status" value="1"/>
</dbReference>
<dbReference type="SUPFAM" id="SSF47648">
    <property type="entry name" value="Nucleoside phosphorylase/phosphoribosyltransferase N-terminal domain"/>
    <property type="match status" value="1"/>
</dbReference>
<comment type="function">
    <text evidence="1">Catalyzes the transfer of the phosphoribosyl group of 5-phosphorylribose-1-pyrophosphate (PRPP) to anthranilate to yield N-(5'-phosphoribosyl)-anthranilate (PRA).</text>
</comment>
<comment type="catalytic activity">
    <reaction evidence="1">
        <text>N-(5-phospho-beta-D-ribosyl)anthranilate + diphosphate = 5-phospho-alpha-D-ribose 1-diphosphate + anthranilate</text>
        <dbReference type="Rhea" id="RHEA:11768"/>
        <dbReference type="ChEBI" id="CHEBI:16567"/>
        <dbReference type="ChEBI" id="CHEBI:18277"/>
        <dbReference type="ChEBI" id="CHEBI:33019"/>
        <dbReference type="ChEBI" id="CHEBI:58017"/>
        <dbReference type="EC" id="2.4.2.18"/>
    </reaction>
</comment>
<comment type="cofactor">
    <cofactor evidence="1">
        <name>Mg(2+)</name>
        <dbReference type="ChEBI" id="CHEBI:18420"/>
    </cofactor>
    <text evidence="1">Binds 2 magnesium ions per monomer.</text>
</comment>
<comment type="pathway">
    <text evidence="1">Amino-acid biosynthesis; L-tryptophan biosynthesis; L-tryptophan from chorismate: step 2/5.</text>
</comment>
<comment type="subunit">
    <text evidence="1">Homodimer.</text>
</comment>
<comment type="similarity">
    <text evidence="1">Belongs to the anthranilate phosphoribosyltransferase family.</text>
</comment>
<keyword id="KW-0028">Amino-acid biosynthesis</keyword>
<keyword id="KW-0057">Aromatic amino acid biosynthesis</keyword>
<keyword id="KW-0328">Glycosyltransferase</keyword>
<keyword id="KW-0460">Magnesium</keyword>
<keyword id="KW-0479">Metal-binding</keyword>
<keyword id="KW-0808">Transferase</keyword>
<keyword id="KW-0822">Tryptophan biosynthesis</keyword>
<organism>
    <name type="scientific">Legionella pneumophila (strain Corby)</name>
    <dbReference type="NCBI Taxonomy" id="400673"/>
    <lineage>
        <taxon>Bacteria</taxon>
        <taxon>Pseudomonadati</taxon>
        <taxon>Pseudomonadota</taxon>
        <taxon>Gammaproteobacteria</taxon>
        <taxon>Legionellales</taxon>
        <taxon>Legionellaceae</taxon>
        <taxon>Legionella</taxon>
    </lineage>
</organism>
<sequence length="344" mass="37435">MKPKLLFEQLLSRQDLSSDQMQEVIHACMTGEFSDVQIATFLALMRMKSETVNELTAAAKVMRQLAHKIDLGNPLIDIVGTGGDGRNTFNVSTACSFVVAAAGIKVAKHGNRSVSSRSGSADLLEQAGFILNLSDSQVQNCINQCQLAFLFAPHYHPAMQHARAARQQLGIRTLFNLLGPLINPAQVKRQVVGVFSTNWLKTIATVLANLGSERSLVISSQDGLDEISIAAKSEVVEYRDGNFKQWFISPEDYGLKHSSLDAIIVDSPEQSLHLIQSVLSGDSGPARDIVLLNSAAAIYCAKDGISFDASIEEARIAIDSGKANHCFNKLRLLTQTLNKESNHE</sequence>
<protein>
    <recommendedName>
        <fullName evidence="1">Anthranilate phosphoribosyltransferase</fullName>
        <ecNumber evidence="1">2.4.2.18</ecNumber>
    </recommendedName>
</protein>
<evidence type="ECO:0000255" key="1">
    <source>
        <dbReference type="HAMAP-Rule" id="MF_00211"/>
    </source>
</evidence>
<accession>A5IG81</accession>
<proteinExistence type="inferred from homology"/>
<gene>
    <name evidence="1" type="primary">trpD</name>
    <name type="ordered locus">LPC_2461</name>
</gene>
<reference key="1">
    <citation type="submission" date="2006-11" db="EMBL/GenBank/DDBJ databases">
        <title>Identification and characterization of a new conjugation/ type IVA secretion system (trb/tra) of L. pneumophila Corby localized on a mobile genomic island.</title>
        <authorList>
            <person name="Gloeckner G."/>
            <person name="Albert-Weissenberger C."/>
            <person name="Weinmann E."/>
            <person name="Jacobi S."/>
            <person name="Schunder E."/>
            <person name="Steinert M."/>
            <person name="Buchrieser C."/>
            <person name="Hacker J."/>
            <person name="Heuner K."/>
        </authorList>
    </citation>
    <scope>NUCLEOTIDE SEQUENCE [LARGE SCALE GENOMIC DNA]</scope>
    <source>
        <strain>Corby</strain>
    </source>
</reference>
<name>TRPD_LEGPC</name>